<comment type="function">
    <text evidence="1">Catalyzes the reaction of cyanate with bicarbonate to produce ammonia and carbon dioxide.</text>
</comment>
<comment type="catalytic activity">
    <reaction evidence="1">
        <text>cyanate + hydrogencarbonate + 3 H(+) = NH4(+) + 2 CO2</text>
        <dbReference type="Rhea" id="RHEA:11120"/>
        <dbReference type="ChEBI" id="CHEBI:15378"/>
        <dbReference type="ChEBI" id="CHEBI:16526"/>
        <dbReference type="ChEBI" id="CHEBI:17544"/>
        <dbReference type="ChEBI" id="CHEBI:28938"/>
        <dbReference type="ChEBI" id="CHEBI:29195"/>
        <dbReference type="EC" id="4.2.1.104"/>
    </reaction>
</comment>
<comment type="similarity">
    <text evidence="1">Belongs to the cyanase family.</text>
</comment>
<accession>Q5N0J1</accession>
<dbReference type="EC" id="4.2.1.104" evidence="1"/>
<dbReference type="EMBL" id="AP008231">
    <property type="protein sequence ID" value="BAD80179.1"/>
    <property type="molecule type" value="Genomic_DNA"/>
</dbReference>
<dbReference type="RefSeq" id="WP_011244299.1">
    <property type="nucleotide sequence ID" value="NZ_CP085785.1"/>
</dbReference>
<dbReference type="SMR" id="Q5N0J1"/>
<dbReference type="GeneID" id="72430980"/>
<dbReference type="KEGG" id="syc:syc1989_d"/>
<dbReference type="eggNOG" id="COG1513">
    <property type="taxonomic scope" value="Bacteria"/>
</dbReference>
<dbReference type="BRENDA" id="4.2.1.104">
    <property type="organism ID" value="6187"/>
</dbReference>
<dbReference type="Proteomes" id="UP000001175">
    <property type="component" value="Chromosome"/>
</dbReference>
<dbReference type="GO" id="GO:0008824">
    <property type="term" value="F:cyanate hydratase activity"/>
    <property type="evidence" value="ECO:0007669"/>
    <property type="project" value="UniProtKB-UniRule"/>
</dbReference>
<dbReference type="GO" id="GO:0003677">
    <property type="term" value="F:DNA binding"/>
    <property type="evidence" value="ECO:0007669"/>
    <property type="project" value="InterPro"/>
</dbReference>
<dbReference type="GO" id="GO:0009439">
    <property type="term" value="P:cyanate metabolic process"/>
    <property type="evidence" value="ECO:0007669"/>
    <property type="project" value="UniProtKB-UniRule"/>
</dbReference>
<dbReference type="CDD" id="cd00559">
    <property type="entry name" value="Cyanase_C"/>
    <property type="match status" value="1"/>
</dbReference>
<dbReference type="CDD" id="cd00093">
    <property type="entry name" value="HTH_XRE"/>
    <property type="match status" value="1"/>
</dbReference>
<dbReference type="Gene3D" id="3.30.1160.10">
    <property type="entry name" value="Cyanate lyase, C-terminal domain"/>
    <property type="match status" value="1"/>
</dbReference>
<dbReference type="Gene3D" id="1.10.260.40">
    <property type="entry name" value="lambda repressor-like DNA-binding domains"/>
    <property type="match status" value="1"/>
</dbReference>
<dbReference type="HAMAP" id="MF_00535">
    <property type="entry name" value="Cyanate_hydrat"/>
    <property type="match status" value="1"/>
</dbReference>
<dbReference type="InterPro" id="IPR001387">
    <property type="entry name" value="Cro/C1-type_HTH"/>
</dbReference>
<dbReference type="InterPro" id="IPR008076">
    <property type="entry name" value="Cyanase"/>
</dbReference>
<dbReference type="InterPro" id="IPR003712">
    <property type="entry name" value="Cyanate_lyase_C"/>
</dbReference>
<dbReference type="InterPro" id="IPR036581">
    <property type="entry name" value="Cyanate_lyase_C_sf"/>
</dbReference>
<dbReference type="InterPro" id="IPR010982">
    <property type="entry name" value="Lambda_DNA-bd_dom_sf"/>
</dbReference>
<dbReference type="NCBIfam" id="TIGR00673">
    <property type="entry name" value="cynS"/>
    <property type="match status" value="1"/>
</dbReference>
<dbReference type="NCBIfam" id="NF002773">
    <property type="entry name" value="PRK02866.1"/>
    <property type="match status" value="1"/>
</dbReference>
<dbReference type="PANTHER" id="PTHR34186">
    <property type="entry name" value="CYANATE HYDRATASE"/>
    <property type="match status" value="1"/>
</dbReference>
<dbReference type="PANTHER" id="PTHR34186:SF2">
    <property type="entry name" value="CYANATE HYDRATASE"/>
    <property type="match status" value="1"/>
</dbReference>
<dbReference type="Pfam" id="PF02560">
    <property type="entry name" value="Cyanate_lyase"/>
    <property type="match status" value="1"/>
</dbReference>
<dbReference type="PIRSF" id="PIRSF001263">
    <property type="entry name" value="Cyanate_hydratas"/>
    <property type="match status" value="1"/>
</dbReference>
<dbReference type="PRINTS" id="PR01693">
    <property type="entry name" value="CYANASE"/>
</dbReference>
<dbReference type="SMART" id="SM01116">
    <property type="entry name" value="Cyanate_lyase"/>
    <property type="match status" value="1"/>
</dbReference>
<dbReference type="SUPFAM" id="SSF55234">
    <property type="entry name" value="Cyanase C-terminal domain"/>
    <property type="match status" value="1"/>
</dbReference>
<dbReference type="SUPFAM" id="SSF47413">
    <property type="entry name" value="lambda repressor-like DNA-binding domains"/>
    <property type="match status" value="1"/>
</dbReference>
<feature type="chain" id="PRO_1000051488" description="Cyanate hydratase">
    <location>
        <begin position="1"/>
        <end position="146"/>
    </location>
</feature>
<feature type="active site" evidence="1">
    <location>
        <position position="87"/>
    </location>
</feature>
<feature type="active site" evidence="1">
    <location>
        <position position="90"/>
    </location>
</feature>
<feature type="active site" evidence="1">
    <location>
        <position position="113"/>
    </location>
</feature>
<protein>
    <recommendedName>
        <fullName evidence="1">Cyanate hydratase</fullName>
        <shortName evidence="1">Cyanase</shortName>
        <ecNumber evidence="1">4.2.1.104</ecNumber>
    </recommendedName>
    <alternativeName>
        <fullName evidence="1">Cyanate hydrolase</fullName>
    </alternativeName>
    <alternativeName>
        <fullName evidence="1">Cyanate lyase</fullName>
    </alternativeName>
</protein>
<gene>
    <name evidence="1" type="primary">cynS</name>
    <name type="ordered locus">syc1989_d</name>
</gene>
<reference key="1">
    <citation type="journal article" date="2007" name="Photosyn. Res.">
        <title>Complete nucleotide sequence of the freshwater unicellular cyanobacterium Synechococcus elongatus PCC 6301 chromosome: gene content and organization.</title>
        <authorList>
            <person name="Sugita C."/>
            <person name="Ogata K."/>
            <person name="Shikata M."/>
            <person name="Jikuya H."/>
            <person name="Takano J."/>
            <person name="Furumichi M."/>
            <person name="Kanehisa M."/>
            <person name="Omata T."/>
            <person name="Sugiura M."/>
            <person name="Sugita M."/>
        </authorList>
    </citation>
    <scope>NUCLEOTIDE SEQUENCE [LARGE SCALE GENOMIC DNA]</scope>
    <source>
        <strain>ATCC 27144 / PCC 6301 / SAUG 1402/1</strain>
    </source>
</reference>
<sequence length="146" mass="16362">MTSAITEQLLKAKKAKGITFTELEQLLGRDEVWIASVFYRQSTASPEEAEKLLTALGLDLALADELTTPPVKGCLEPVIPTDPLIYRFYEIMQVYGLPLKDVIQEKFGDGIMSAIDFTLDVDKVEDPKGDRVKVTMCGKFLAYKKW</sequence>
<proteinExistence type="inferred from homology"/>
<keyword id="KW-0456">Lyase</keyword>
<organism>
    <name type="scientific">Synechococcus sp. (strain ATCC 27144 / PCC 6301 / SAUG 1402/1)</name>
    <name type="common">Anacystis nidulans</name>
    <dbReference type="NCBI Taxonomy" id="269084"/>
    <lineage>
        <taxon>Bacteria</taxon>
        <taxon>Bacillati</taxon>
        <taxon>Cyanobacteriota</taxon>
        <taxon>Cyanophyceae</taxon>
        <taxon>Synechococcales</taxon>
        <taxon>Synechococcaceae</taxon>
        <taxon>Synechococcus</taxon>
    </lineage>
</organism>
<name>CYNS_SYNP6</name>
<evidence type="ECO:0000255" key="1">
    <source>
        <dbReference type="HAMAP-Rule" id="MF_00535"/>
    </source>
</evidence>